<evidence type="ECO:0000255" key="1">
    <source>
        <dbReference type="HAMAP-Rule" id="MF_00639"/>
    </source>
</evidence>
<organism>
    <name type="scientific">Streptococcus mutans serotype c (strain ATCC 700610 / UA159)</name>
    <dbReference type="NCBI Taxonomy" id="210007"/>
    <lineage>
        <taxon>Bacteria</taxon>
        <taxon>Bacillati</taxon>
        <taxon>Bacillota</taxon>
        <taxon>Bacilli</taxon>
        <taxon>Lactobacillales</taxon>
        <taxon>Streptococcaceae</taxon>
        <taxon>Streptococcus</taxon>
    </lineage>
</organism>
<name>MURD_STRMU</name>
<feature type="chain" id="PRO_0000109095" description="UDP-N-acetylmuramoylalanine--D-glutamate ligase">
    <location>
        <begin position="1"/>
        <end position="451"/>
    </location>
</feature>
<feature type="binding site" evidence="1">
    <location>
        <begin position="119"/>
        <end position="125"/>
    </location>
    <ligand>
        <name>ATP</name>
        <dbReference type="ChEBI" id="CHEBI:30616"/>
    </ligand>
</feature>
<proteinExistence type="inferred from homology"/>
<dbReference type="EC" id="6.3.2.9" evidence="1"/>
<dbReference type="EMBL" id="AE014133">
    <property type="protein sequence ID" value="AAN58290.1"/>
    <property type="molecule type" value="Genomic_DNA"/>
</dbReference>
<dbReference type="RefSeq" id="NP_720984.1">
    <property type="nucleotide sequence ID" value="NC_004350.2"/>
</dbReference>
<dbReference type="RefSeq" id="WP_002262065.1">
    <property type="nucleotide sequence ID" value="NC_004350.2"/>
</dbReference>
<dbReference type="SMR" id="Q8DVE3"/>
<dbReference type="STRING" id="210007.SMU_548"/>
<dbReference type="KEGG" id="smu:SMU_548"/>
<dbReference type="PATRIC" id="fig|210007.7.peg.483"/>
<dbReference type="eggNOG" id="COG0771">
    <property type="taxonomic scope" value="Bacteria"/>
</dbReference>
<dbReference type="HOGENOM" id="CLU_032540_0_1_9"/>
<dbReference type="OrthoDB" id="9809796at2"/>
<dbReference type="PhylomeDB" id="Q8DVE3"/>
<dbReference type="UniPathway" id="UPA00219"/>
<dbReference type="Proteomes" id="UP000002512">
    <property type="component" value="Chromosome"/>
</dbReference>
<dbReference type="GO" id="GO:0005737">
    <property type="term" value="C:cytoplasm"/>
    <property type="evidence" value="ECO:0007669"/>
    <property type="project" value="UniProtKB-SubCell"/>
</dbReference>
<dbReference type="GO" id="GO:0005524">
    <property type="term" value="F:ATP binding"/>
    <property type="evidence" value="ECO:0007669"/>
    <property type="project" value="UniProtKB-UniRule"/>
</dbReference>
<dbReference type="GO" id="GO:0008764">
    <property type="term" value="F:UDP-N-acetylmuramoylalanine-D-glutamate ligase activity"/>
    <property type="evidence" value="ECO:0007669"/>
    <property type="project" value="UniProtKB-UniRule"/>
</dbReference>
<dbReference type="GO" id="GO:0051301">
    <property type="term" value="P:cell division"/>
    <property type="evidence" value="ECO:0007669"/>
    <property type="project" value="UniProtKB-KW"/>
</dbReference>
<dbReference type="GO" id="GO:0071555">
    <property type="term" value="P:cell wall organization"/>
    <property type="evidence" value="ECO:0007669"/>
    <property type="project" value="UniProtKB-KW"/>
</dbReference>
<dbReference type="GO" id="GO:0009252">
    <property type="term" value="P:peptidoglycan biosynthetic process"/>
    <property type="evidence" value="ECO:0007669"/>
    <property type="project" value="UniProtKB-UniRule"/>
</dbReference>
<dbReference type="GO" id="GO:0008360">
    <property type="term" value="P:regulation of cell shape"/>
    <property type="evidence" value="ECO:0007669"/>
    <property type="project" value="UniProtKB-KW"/>
</dbReference>
<dbReference type="Gene3D" id="3.90.190.20">
    <property type="entry name" value="Mur ligase, C-terminal domain"/>
    <property type="match status" value="1"/>
</dbReference>
<dbReference type="Gene3D" id="3.40.1190.10">
    <property type="entry name" value="Mur-like, catalytic domain"/>
    <property type="match status" value="1"/>
</dbReference>
<dbReference type="Gene3D" id="3.40.50.720">
    <property type="entry name" value="NAD(P)-binding Rossmann-like Domain"/>
    <property type="match status" value="1"/>
</dbReference>
<dbReference type="HAMAP" id="MF_00639">
    <property type="entry name" value="MurD"/>
    <property type="match status" value="1"/>
</dbReference>
<dbReference type="InterPro" id="IPR036565">
    <property type="entry name" value="Mur-like_cat_sf"/>
</dbReference>
<dbReference type="InterPro" id="IPR004101">
    <property type="entry name" value="Mur_ligase_C"/>
</dbReference>
<dbReference type="InterPro" id="IPR036615">
    <property type="entry name" value="Mur_ligase_C_dom_sf"/>
</dbReference>
<dbReference type="InterPro" id="IPR013221">
    <property type="entry name" value="Mur_ligase_cen"/>
</dbReference>
<dbReference type="InterPro" id="IPR005762">
    <property type="entry name" value="MurD"/>
</dbReference>
<dbReference type="NCBIfam" id="TIGR01087">
    <property type="entry name" value="murD"/>
    <property type="match status" value="1"/>
</dbReference>
<dbReference type="PANTHER" id="PTHR43692">
    <property type="entry name" value="UDP-N-ACETYLMURAMOYLALANINE--D-GLUTAMATE LIGASE"/>
    <property type="match status" value="1"/>
</dbReference>
<dbReference type="PANTHER" id="PTHR43692:SF1">
    <property type="entry name" value="UDP-N-ACETYLMURAMOYLALANINE--D-GLUTAMATE LIGASE"/>
    <property type="match status" value="1"/>
</dbReference>
<dbReference type="Pfam" id="PF02875">
    <property type="entry name" value="Mur_ligase_C"/>
    <property type="match status" value="1"/>
</dbReference>
<dbReference type="Pfam" id="PF08245">
    <property type="entry name" value="Mur_ligase_M"/>
    <property type="match status" value="1"/>
</dbReference>
<dbReference type="Pfam" id="PF21799">
    <property type="entry name" value="MurD-like_N"/>
    <property type="match status" value="1"/>
</dbReference>
<dbReference type="SUPFAM" id="SSF51984">
    <property type="entry name" value="MurCD N-terminal domain"/>
    <property type="match status" value="1"/>
</dbReference>
<dbReference type="SUPFAM" id="SSF53623">
    <property type="entry name" value="MurD-like peptide ligases, catalytic domain"/>
    <property type="match status" value="1"/>
</dbReference>
<dbReference type="SUPFAM" id="SSF53244">
    <property type="entry name" value="MurD-like peptide ligases, peptide-binding domain"/>
    <property type="match status" value="1"/>
</dbReference>
<accession>Q8DVE3</accession>
<keyword id="KW-0067">ATP-binding</keyword>
<keyword id="KW-0131">Cell cycle</keyword>
<keyword id="KW-0132">Cell division</keyword>
<keyword id="KW-0133">Cell shape</keyword>
<keyword id="KW-0961">Cell wall biogenesis/degradation</keyword>
<keyword id="KW-0963">Cytoplasm</keyword>
<keyword id="KW-0436">Ligase</keyword>
<keyword id="KW-0547">Nucleotide-binding</keyword>
<keyword id="KW-0573">Peptidoglycan synthesis</keyword>
<keyword id="KW-1185">Reference proteome</keyword>
<sequence>MKHVKNFENKKVLVLGLARSGEAAARLLAKLGAIVTVNDGKPFDENPSAQALLEEGIKVICGSHPLELLDEAFAYMVKNPGIPYTNPMVVRALEKNIPVITEVELAYLISEAPIIGITGSNGKTTTTTMIADVLNHAGQSARLSGNIGFPASEVAQPVTEKDILVMELSSFQLMGTESFHPHMAVITNLMPTHIDYHGSFENYIEAKWNIQKNMTKEDFLVLNFNQDLAKDLANQTQAKIIPFSTKEKVDGAYLDGQMLCFKGQAIMSASELGVPGSHNVENALATIAVAKLSGVSNEAIRETLIHFGGVKHRLQSLGNIAGVKFYNDSKSTNILATQKALSGFDNSKVILIAGGLDRGNEFDELVPDIKGLKKMIILGESAPRLKHAAVQAGVTYLNAKDVAQATRIAFQEASPGDVVLLSPANASWDMYKNFEVRGDEFITTFKSLKGE</sequence>
<reference key="1">
    <citation type="journal article" date="2002" name="Proc. Natl. Acad. Sci. U.S.A.">
        <title>Genome sequence of Streptococcus mutans UA159, a cariogenic dental pathogen.</title>
        <authorList>
            <person name="Ajdic D.J."/>
            <person name="McShan W.M."/>
            <person name="McLaughlin R.E."/>
            <person name="Savic G."/>
            <person name="Chang J."/>
            <person name="Carson M.B."/>
            <person name="Primeaux C."/>
            <person name="Tian R."/>
            <person name="Kenton S."/>
            <person name="Jia H.G."/>
            <person name="Lin S.P."/>
            <person name="Qian Y."/>
            <person name="Li S."/>
            <person name="Zhu H."/>
            <person name="Najar F.Z."/>
            <person name="Lai H."/>
            <person name="White J."/>
            <person name="Roe B.A."/>
            <person name="Ferretti J.J."/>
        </authorList>
    </citation>
    <scope>NUCLEOTIDE SEQUENCE [LARGE SCALE GENOMIC DNA]</scope>
    <source>
        <strain>ATCC 700610 / UA159</strain>
    </source>
</reference>
<gene>
    <name evidence="1" type="primary">murD</name>
    <name type="ordered locus">SMU_548</name>
</gene>
<comment type="function">
    <text evidence="1">Cell wall formation. Catalyzes the addition of glutamate to the nucleotide precursor UDP-N-acetylmuramoyl-L-alanine (UMA).</text>
</comment>
<comment type="catalytic activity">
    <reaction evidence="1">
        <text>UDP-N-acetyl-alpha-D-muramoyl-L-alanine + D-glutamate + ATP = UDP-N-acetyl-alpha-D-muramoyl-L-alanyl-D-glutamate + ADP + phosphate + H(+)</text>
        <dbReference type="Rhea" id="RHEA:16429"/>
        <dbReference type="ChEBI" id="CHEBI:15378"/>
        <dbReference type="ChEBI" id="CHEBI:29986"/>
        <dbReference type="ChEBI" id="CHEBI:30616"/>
        <dbReference type="ChEBI" id="CHEBI:43474"/>
        <dbReference type="ChEBI" id="CHEBI:83898"/>
        <dbReference type="ChEBI" id="CHEBI:83900"/>
        <dbReference type="ChEBI" id="CHEBI:456216"/>
        <dbReference type="EC" id="6.3.2.9"/>
    </reaction>
</comment>
<comment type="pathway">
    <text evidence="1">Cell wall biogenesis; peptidoglycan biosynthesis.</text>
</comment>
<comment type="subcellular location">
    <subcellularLocation>
        <location evidence="1">Cytoplasm</location>
    </subcellularLocation>
</comment>
<comment type="similarity">
    <text evidence="1">Belongs to the MurCDEF family.</text>
</comment>
<protein>
    <recommendedName>
        <fullName evidence="1">UDP-N-acetylmuramoylalanine--D-glutamate ligase</fullName>
        <ecNumber evidence="1">6.3.2.9</ecNumber>
    </recommendedName>
    <alternativeName>
        <fullName evidence="1">D-glutamic acid-adding enzyme</fullName>
    </alternativeName>
    <alternativeName>
        <fullName evidence="1">UDP-N-acetylmuramoyl-L-alanyl-D-glutamate synthetase</fullName>
    </alternativeName>
</protein>